<gene>
    <name type="primary">ptsT</name>
</gene>
<dbReference type="EMBL" id="U12340">
    <property type="protein sequence ID" value="AAA86050.1"/>
    <property type="molecule type" value="Genomic_DNA"/>
</dbReference>
<proteinExistence type="predicted"/>
<reference key="1">
    <citation type="journal article" date="1995" name="Microbiology">
        <title>Discovery of a ptsHI operon, which includes a third gene (ptsT), in the thermophile Bacillus stearothermophilus.</title>
        <authorList>
            <person name="Lai X."/>
            <person name="Ingram L.O."/>
        </authorList>
    </citation>
    <scope>NUCLEOTIDE SEQUENCE [GENOMIC DNA]</scope>
    <source>
        <strain>XL-65-6</strain>
    </source>
</reference>
<feature type="chain" id="PRO_0000097096" description="Protein PtsT">
    <location>
        <begin position="1"/>
        <end position="155"/>
    </location>
</feature>
<accession>P42019</accession>
<name>PTST_GEOSE</name>
<sequence>MKAWRRLRSPRFFRFALCQQRRRRFIAIPLPDRKRKADSDNFRHLVNNVQIRIRKHAHISRVLHHDSHDADVSDRWQRFAERRARGKGARADGDRMDKRLRPDNAVDCHYICSVFVLQLFGNASDVCRIDGLPERADDGQMIRISVFQQRADERP</sequence>
<protein>
    <recommendedName>
        <fullName>Protein PtsT</fullName>
    </recommendedName>
</protein>
<organism>
    <name type="scientific">Geobacillus stearothermophilus</name>
    <name type="common">Bacillus stearothermophilus</name>
    <dbReference type="NCBI Taxonomy" id="1422"/>
    <lineage>
        <taxon>Bacteria</taxon>
        <taxon>Bacillati</taxon>
        <taxon>Bacillota</taxon>
        <taxon>Bacilli</taxon>
        <taxon>Bacillales</taxon>
        <taxon>Anoxybacillaceae</taxon>
        <taxon>Geobacillus</taxon>
    </lineage>
</organism>